<organism>
    <name type="scientific">Pseudomonas entomophila (strain L48)</name>
    <dbReference type="NCBI Taxonomy" id="384676"/>
    <lineage>
        <taxon>Bacteria</taxon>
        <taxon>Pseudomonadati</taxon>
        <taxon>Pseudomonadota</taxon>
        <taxon>Gammaproteobacteria</taxon>
        <taxon>Pseudomonadales</taxon>
        <taxon>Pseudomonadaceae</taxon>
        <taxon>Pseudomonas</taxon>
    </lineage>
</organism>
<name>RL23_PSEE4</name>
<accession>Q1IFW4</accession>
<feature type="chain" id="PRO_1000068140" description="Large ribosomal subunit protein uL23">
    <location>
        <begin position="1"/>
        <end position="99"/>
    </location>
</feature>
<gene>
    <name evidence="1" type="primary">rplW</name>
    <name type="ordered locus">PSEEN0492</name>
</gene>
<keyword id="KW-0687">Ribonucleoprotein</keyword>
<keyword id="KW-0689">Ribosomal protein</keyword>
<keyword id="KW-0694">RNA-binding</keyword>
<keyword id="KW-0699">rRNA-binding</keyword>
<reference key="1">
    <citation type="journal article" date="2006" name="Nat. Biotechnol.">
        <title>Complete genome sequence of the entomopathogenic and metabolically versatile soil bacterium Pseudomonas entomophila.</title>
        <authorList>
            <person name="Vodovar N."/>
            <person name="Vallenet D."/>
            <person name="Cruveiller S."/>
            <person name="Rouy Z."/>
            <person name="Barbe V."/>
            <person name="Acosta C."/>
            <person name="Cattolico L."/>
            <person name="Jubin C."/>
            <person name="Lajus A."/>
            <person name="Segurens B."/>
            <person name="Vacherie B."/>
            <person name="Wincker P."/>
            <person name="Weissenbach J."/>
            <person name="Lemaitre B."/>
            <person name="Medigue C."/>
            <person name="Boccard F."/>
        </authorList>
    </citation>
    <scope>NUCLEOTIDE SEQUENCE [LARGE SCALE GENOMIC DNA]</scope>
    <source>
        <strain>L48</strain>
    </source>
</reference>
<proteinExistence type="inferred from homology"/>
<evidence type="ECO:0000255" key="1">
    <source>
        <dbReference type="HAMAP-Rule" id="MF_01369"/>
    </source>
</evidence>
<evidence type="ECO:0000305" key="2"/>
<comment type="function">
    <text evidence="1">One of the early assembly proteins it binds 23S rRNA. One of the proteins that surrounds the polypeptide exit tunnel on the outside of the ribosome. Forms the main docking site for trigger factor binding to the ribosome.</text>
</comment>
<comment type="subunit">
    <text evidence="1">Part of the 50S ribosomal subunit. Contacts protein L29, and trigger factor when it is bound to the ribosome.</text>
</comment>
<comment type="similarity">
    <text evidence="1">Belongs to the universal ribosomal protein uL23 family.</text>
</comment>
<protein>
    <recommendedName>
        <fullName evidence="1">Large ribosomal subunit protein uL23</fullName>
    </recommendedName>
    <alternativeName>
        <fullName evidence="2">50S ribosomal protein L23</fullName>
    </alternativeName>
</protein>
<dbReference type="EMBL" id="CT573326">
    <property type="protein sequence ID" value="CAK13438.1"/>
    <property type="molecule type" value="Genomic_DNA"/>
</dbReference>
<dbReference type="RefSeq" id="WP_003255484.1">
    <property type="nucleotide sequence ID" value="NC_008027.1"/>
</dbReference>
<dbReference type="SMR" id="Q1IFW4"/>
<dbReference type="STRING" id="384676.PSEEN0492"/>
<dbReference type="GeneID" id="97165981"/>
<dbReference type="KEGG" id="pen:PSEEN0492"/>
<dbReference type="eggNOG" id="COG0089">
    <property type="taxonomic scope" value="Bacteria"/>
</dbReference>
<dbReference type="HOGENOM" id="CLU_037562_3_1_6"/>
<dbReference type="OrthoDB" id="9793353at2"/>
<dbReference type="Proteomes" id="UP000000658">
    <property type="component" value="Chromosome"/>
</dbReference>
<dbReference type="GO" id="GO:1990904">
    <property type="term" value="C:ribonucleoprotein complex"/>
    <property type="evidence" value="ECO:0007669"/>
    <property type="project" value="UniProtKB-KW"/>
</dbReference>
<dbReference type="GO" id="GO:0005840">
    <property type="term" value="C:ribosome"/>
    <property type="evidence" value="ECO:0007669"/>
    <property type="project" value="UniProtKB-KW"/>
</dbReference>
<dbReference type="GO" id="GO:0019843">
    <property type="term" value="F:rRNA binding"/>
    <property type="evidence" value="ECO:0007669"/>
    <property type="project" value="UniProtKB-UniRule"/>
</dbReference>
<dbReference type="GO" id="GO:0003735">
    <property type="term" value="F:structural constituent of ribosome"/>
    <property type="evidence" value="ECO:0007669"/>
    <property type="project" value="InterPro"/>
</dbReference>
<dbReference type="GO" id="GO:0006412">
    <property type="term" value="P:translation"/>
    <property type="evidence" value="ECO:0007669"/>
    <property type="project" value="UniProtKB-UniRule"/>
</dbReference>
<dbReference type="FunFam" id="3.30.70.330:FF:000001">
    <property type="entry name" value="50S ribosomal protein L23"/>
    <property type="match status" value="1"/>
</dbReference>
<dbReference type="Gene3D" id="3.30.70.330">
    <property type="match status" value="1"/>
</dbReference>
<dbReference type="HAMAP" id="MF_01369_B">
    <property type="entry name" value="Ribosomal_uL23_B"/>
    <property type="match status" value="1"/>
</dbReference>
<dbReference type="InterPro" id="IPR012677">
    <property type="entry name" value="Nucleotide-bd_a/b_plait_sf"/>
</dbReference>
<dbReference type="InterPro" id="IPR013025">
    <property type="entry name" value="Ribosomal_uL23-like"/>
</dbReference>
<dbReference type="InterPro" id="IPR012678">
    <property type="entry name" value="Ribosomal_uL23/eL15/eS24_sf"/>
</dbReference>
<dbReference type="NCBIfam" id="NF004359">
    <property type="entry name" value="PRK05738.1-3"/>
    <property type="match status" value="1"/>
</dbReference>
<dbReference type="NCBIfam" id="NF004363">
    <property type="entry name" value="PRK05738.2-4"/>
    <property type="match status" value="1"/>
</dbReference>
<dbReference type="PANTHER" id="PTHR11620">
    <property type="entry name" value="60S RIBOSOMAL PROTEIN L23A"/>
    <property type="match status" value="1"/>
</dbReference>
<dbReference type="Pfam" id="PF00276">
    <property type="entry name" value="Ribosomal_L23"/>
    <property type="match status" value="1"/>
</dbReference>
<dbReference type="SUPFAM" id="SSF54189">
    <property type="entry name" value="Ribosomal proteins S24e, L23 and L15e"/>
    <property type="match status" value="1"/>
</dbReference>
<sequence length="99" mass="10900">MNQERVFKVLLGPHVSEKATVLAEKKGQFVFKVATDATKLEIKKAVEGLFNVKVENVSTVNVLGKTKRTARGLGKRNDWKKAIVSLQPGQDLDFSSSAE</sequence>